<gene>
    <name evidence="1" type="primary">entS</name>
    <name type="ordered locus">ECIAI1_0575</name>
</gene>
<organism>
    <name type="scientific">Escherichia coli O8 (strain IAI1)</name>
    <dbReference type="NCBI Taxonomy" id="585034"/>
    <lineage>
        <taxon>Bacteria</taxon>
        <taxon>Pseudomonadati</taxon>
        <taxon>Pseudomonadota</taxon>
        <taxon>Gammaproteobacteria</taxon>
        <taxon>Enterobacterales</taxon>
        <taxon>Enterobacteriaceae</taxon>
        <taxon>Escherichia</taxon>
    </lineage>
</organism>
<reference key="1">
    <citation type="journal article" date="2009" name="PLoS Genet.">
        <title>Organised genome dynamics in the Escherichia coli species results in highly diverse adaptive paths.</title>
        <authorList>
            <person name="Touchon M."/>
            <person name="Hoede C."/>
            <person name="Tenaillon O."/>
            <person name="Barbe V."/>
            <person name="Baeriswyl S."/>
            <person name="Bidet P."/>
            <person name="Bingen E."/>
            <person name="Bonacorsi S."/>
            <person name="Bouchier C."/>
            <person name="Bouvet O."/>
            <person name="Calteau A."/>
            <person name="Chiapello H."/>
            <person name="Clermont O."/>
            <person name="Cruveiller S."/>
            <person name="Danchin A."/>
            <person name="Diard M."/>
            <person name="Dossat C."/>
            <person name="Karoui M.E."/>
            <person name="Frapy E."/>
            <person name="Garry L."/>
            <person name="Ghigo J.M."/>
            <person name="Gilles A.M."/>
            <person name="Johnson J."/>
            <person name="Le Bouguenec C."/>
            <person name="Lescat M."/>
            <person name="Mangenot S."/>
            <person name="Martinez-Jehanne V."/>
            <person name="Matic I."/>
            <person name="Nassif X."/>
            <person name="Oztas S."/>
            <person name="Petit M.A."/>
            <person name="Pichon C."/>
            <person name="Rouy Z."/>
            <person name="Ruf C.S."/>
            <person name="Schneider D."/>
            <person name="Tourret J."/>
            <person name="Vacherie B."/>
            <person name="Vallenet D."/>
            <person name="Medigue C."/>
            <person name="Rocha E.P.C."/>
            <person name="Denamur E."/>
        </authorList>
    </citation>
    <scope>NUCLEOTIDE SEQUENCE [LARGE SCALE GENOMIC DNA]</scope>
    <source>
        <strain>IAI1</strain>
    </source>
</reference>
<name>ENTS_ECO8A</name>
<comment type="function">
    <text evidence="1">Component of an export pathway for enterobactin.</text>
</comment>
<comment type="subcellular location">
    <subcellularLocation>
        <location evidence="1">Cell inner membrane</location>
        <topology evidence="1">Multi-pass membrane protein</topology>
    </subcellularLocation>
</comment>
<comment type="similarity">
    <text evidence="1">Belongs to the major facilitator superfamily. EntS (TC 2.A.1.38) family.</text>
</comment>
<keyword id="KW-0997">Cell inner membrane</keyword>
<keyword id="KW-1003">Cell membrane</keyword>
<keyword id="KW-0472">Membrane</keyword>
<keyword id="KW-0812">Transmembrane</keyword>
<keyword id="KW-1133">Transmembrane helix</keyword>
<keyword id="KW-0813">Transport</keyword>
<accession>B7M4S3</accession>
<sequence length="416" mass="43301">MNKQSWLLNLSLLKTHPAFRAVFLARFISIVSLGLLGVAVPVQIQMMTHSTWQVGLSVTLTGGAMFVGLMVGGVLADRYERKKVILLARGTCGIGFIGLCLNALLPEPSLLAIYLLGLWDGFFASLGVTALLAATPALVGRENLMQAGAITMLTVRLGSVISPMIGGLLLATGGVAWNYGLAAAGTFITLLPLLSLPALPPPPQPREHPLKSLLAGFRFLLASPLVGGIALLGGLLTMASAVRVLYPALADNWQMSAAQIGFLYAAIPLGAAIGALTSGKLAHSARPGLLMLLSTLGSFLAIGLFGLMPMWILGVVCLALFGWLSAVSSLLQYTMLQTQTPEAMLGRINGLWTAQNVTGDAIGAALLGGLGAMMTPVASASASGFGLLIIGVLLLLVLVELRRFRQTPPQVTASDS</sequence>
<dbReference type="EMBL" id="CU928160">
    <property type="protein sequence ID" value="CAQ97445.1"/>
    <property type="molecule type" value="Genomic_DNA"/>
</dbReference>
<dbReference type="RefSeq" id="WP_001041789.1">
    <property type="nucleotide sequence ID" value="NC_011741.1"/>
</dbReference>
<dbReference type="SMR" id="B7M4S3"/>
<dbReference type="GeneID" id="93776895"/>
<dbReference type="KEGG" id="ecr:ECIAI1_0575"/>
<dbReference type="HOGENOM" id="CLU_034180_11_0_6"/>
<dbReference type="GO" id="GO:0005886">
    <property type="term" value="C:plasma membrane"/>
    <property type="evidence" value="ECO:0007669"/>
    <property type="project" value="UniProtKB-SubCell"/>
</dbReference>
<dbReference type="GO" id="GO:0042931">
    <property type="term" value="F:enterobactin transmembrane transporter activity"/>
    <property type="evidence" value="ECO:0007669"/>
    <property type="project" value="InterPro"/>
</dbReference>
<dbReference type="CDD" id="cd06173">
    <property type="entry name" value="MFS_MefA_like"/>
    <property type="match status" value="1"/>
</dbReference>
<dbReference type="FunFam" id="1.20.1250.20:FF:000056">
    <property type="entry name" value="Enterobactin exporter EntS"/>
    <property type="match status" value="1"/>
</dbReference>
<dbReference type="Gene3D" id="1.20.1250.20">
    <property type="entry name" value="MFS general substrate transporter like domains"/>
    <property type="match status" value="1"/>
</dbReference>
<dbReference type="HAMAP" id="MF_01436">
    <property type="entry name" value="MFS_EntS"/>
    <property type="match status" value="1"/>
</dbReference>
<dbReference type="InterPro" id="IPR023722">
    <property type="entry name" value="Enterobactin_exp_EntS"/>
</dbReference>
<dbReference type="InterPro" id="IPR020846">
    <property type="entry name" value="MFS_dom"/>
</dbReference>
<dbReference type="InterPro" id="IPR036259">
    <property type="entry name" value="MFS_trans_sf"/>
</dbReference>
<dbReference type="InterPro" id="IPR010290">
    <property type="entry name" value="TM_effector"/>
</dbReference>
<dbReference type="NCBIfam" id="NF007792">
    <property type="entry name" value="PRK10489.1"/>
    <property type="match status" value="1"/>
</dbReference>
<dbReference type="PANTHER" id="PTHR23513:SF9">
    <property type="entry name" value="ENTEROBACTIN EXPORTER ENTS"/>
    <property type="match status" value="1"/>
</dbReference>
<dbReference type="PANTHER" id="PTHR23513">
    <property type="entry name" value="INTEGRAL MEMBRANE EFFLUX PROTEIN-RELATED"/>
    <property type="match status" value="1"/>
</dbReference>
<dbReference type="Pfam" id="PF05977">
    <property type="entry name" value="MFS_3"/>
    <property type="match status" value="1"/>
</dbReference>
<dbReference type="SUPFAM" id="SSF103473">
    <property type="entry name" value="MFS general substrate transporter"/>
    <property type="match status" value="1"/>
</dbReference>
<dbReference type="PROSITE" id="PS50850">
    <property type="entry name" value="MFS"/>
    <property type="match status" value="1"/>
</dbReference>
<protein>
    <recommendedName>
        <fullName evidence="1">Enterobactin exporter EntS</fullName>
    </recommendedName>
</protein>
<evidence type="ECO:0000255" key="1">
    <source>
        <dbReference type="HAMAP-Rule" id="MF_01436"/>
    </source>
</evidence>
<feature type="chain" id="PRO_1000145845" description="Enterobactin exporter EntS">
    <location>
        <begin position="1"/>
        <end position="416"/>
    </location>
</feature>
<feature type="topological domain" description="Cytoplasmic" evidence="1">
    <location>
        <begin position="1"/>
        <end position="21"/>
    </location>
</feature>
<feature type="transmembrane region" description="Helical" evidence="1">
    <location>
        <begin position="22"/>
        <end position="42"/>
    </location>
</feature>
<feature type="topological domain" description="Periplasmic" evidence="1">
    <location>
        <begin position="43"/>
        <end position="55"/>
    </location>
</feature>
<feature type="transmembrane region" description="Helical" evidence="1">
    <location>
        <begin position="56"/>
        <end position="76"/>
    </location>
</feature>
<feature type="topological domain" description="Cytoplasmic" evidence="1">
    <location>
        <begin position="77"/>
        <end position="83"/>
    </location>
</feature>
<feature type="transmembrane region" description="Helical" evidence="1">
    <location>
        <begin position="84"/>
        <end position="104"/>
    </location>
</feature>
<feature type="topological domain" description="Periplasmic" evidence="1">
    <location>
        <begin position="105"/>
        <end position="109"/>
    </location>
</feature>
<feature type="transmembrane region" description="Helical" evidence="1">
    <location>
        <begin position="110"/>
        <end position="130"/>
    </location>
</feature>
<feature type="topological domain" description="Cytoplasmic" evidence="1">
    <location>
        <begin position="131"/>
        <end position="156"/>
    </location>
</feature>
<feature type="transmembrane region" description="Helical" evidence="1">
    <location>
        <begin position="157"/>
        <end position="177"/>
    </location>
</feature>
<feature type="topological domain" description="Periplasmic" evidence="1">
    <location>
        <position position="178"/>
    </location>
</feature>
<feature type="transmembrane region" description="Helical" evidence="1">
    <location>
        <begin position="179"/>
        <end position="199"/>
    </location>
</feature>
<feature type="topological domain" description="Cytoplasmic" evidence="1">
    <location>
        <begin position="200"/>
        <end position="218"/>
    </location>
</feature>
<feature type="transmembrane region" description="Helical" evidence="1">
    <location>
        <begin position="219"/>
        <end position="239"/>
    </location>
</feature>
<feature type="topological domain" description="Periplasmic" evidence="1">
    <location>
        <begin position="240"/>
        <end position="256"/>
    </location>
</feature>
<feature type="transmembrane region" description="Helical" evidence="1">
    <location>
        <begin position="257"/>
        <end position="277"/>
    </location>
</feature>
<feature type="topological domain" description="Cytoplasmic" evidence="1">
    <location>
        <begin position="278"/>
        <end position="287"/>
    </location>
</feature>
<feature type="transmembrane region" description="Helical" evidence="1">
    <location>
        <begin position="288"/>
        <end position="307"/>
    </location>
</feature>
<feature type="topological domain" description="Periplasmic" evidence="1">
    <location>
        <begin position="308"/>
        <end position="313"/>
    </location>
</feature>
<feature type="transmembrane region" description="Helical" evidence="1">
    <location>
        <begin position="314"/>
        <end position="336"/>
    </location>
</feature>
<feature type="topological domain" description="Cytoplasmic" evidence="1">
    <location>
        <begin position="337"/>
        <end position="356"/>
    </location>
</feature>
<feature type="transmembrane region" description="Helical" evidence="1">
    <location>
        <begin position="357"/>
        <end position="377"/>
    </location>
</feature>
<feature type="topological domain" description="Periplasmic" evidence="1">
    <location>
        <position position="378"/>
    </location>
</feature>
<feature type="transmembrane region" description="Helical" evidence="1">
    <location>
        <begin position="379"/>
        <end position="399"/>
    </location>
</feature>
<feature type="topological domain" description="Cytoplasmic" evidence="1">
    <location>
        <begin position="400"/>
        <end position="416"/>
    </location>
</feature>
<proteinExistence type="inferred from homology"/>